<reference key="1">
    <citation type="journal article" date="2008" name="Chem. Biol. Interact.">
        <title>Extending the Bacillus cereus group genomics to putative food-borne pathogens of different toxicity.</title>
        <authorList>
            <person name="Lapidus A."/>
            <person name="Goltsman E."/>
            <person name="Auger S."/>
            <person name="Galleron N."/>
            <person name="Segurens B."/>
            <person name="Dossat C."/>
            <person name="Land M.L."/>
            <person name="Broussolle V."/>
            <person name="Brillard J."/>
            <person name="Guinebretiere M.-H."/>
            <person name="Sanchis V."/>
            <person name="Nguen-the C."/>
            <person name="Lereclus D."/>
            <person name="Richardson P."/>
            <person name="Wincker P."/>
            <person name="Weissenbach J."/>
            <person name="Ehrlich S.D."/>
            <person name="Sorokin A."/>
        </authorList>
    </citation>
    <scope>NUCLEOTIDE SEQUENCE [LARGE SCALE GENOMIC DNA]</scope>
    <source>
        <strain>DSM 22905 / CIP 110041 / 391-98 / NVH 391-98</strain>
    </source>
</reference>
<comment type="function">
    <text evidence="1">Modulates RecA activity.</text>
</comment>
<comment type="subcellular location">
    <subcellularLocation>
        <location evidence="1">Cytoplasm</location>
    </subcellularLocation>
</comment>
<comment type="similarity">
    <text evidence="1">Belongs to the RecX family.</text>
</comment>
<gene>
    <name evidence="1" type="primary">recX</name>
    <name type="ordered locus">Bcer98_0437</name>
</gene>
<organism>
    <name type="scientific">Bacillus cytotoxicus (strain DSM 22905 / CIP 110041 / 391-98 / NVH 391-98)</name>
    <dbReference type="NCBI Taxonomy" id="315749"/>
    <lineage>
        <taxon>Bacteria</taxon>
        <taxon>Bacillati</taxon>
        <taxon>Bacillota</taxon>
        <taxon>Bacilli</taxon>
        <taxon>Bacillales</taxon>
        <taxon>Bacillaceae</taxon>
        <taxon>Bacillus</taxon>
        <taxon>Bacillus cereus group</taxon>
    </lineage>
</organism>
<sequence length="270" mass="32117">MAVITKIEVQKRTKERFNIYIDKGQGEEYGFSVNQAVLIKHGLQKGLEIDEVEIANILYNEEVQKAYLQAISYLSYQMRTKQEVEEYLRKKEVGQAIISEVISKLLHDRYINDKEYAVLYVRTQSNVNQKGPSVIRKELLRKGVQEVIITHSLQEYPKEKQVDNAFMLIEKKKRSYQKHSFLQMKQKLEDMLIRKGFSRDVIQICLEELKEEKDDSKQQEALYYHGNKYYEKYKKYDGWTFENKMKQALYRKGFSIDEIEGFLQMKCEEG</sequence>
<proteinExistence type="inferred from homology"/>
<protein>
    <recommendedName>
        <fullName evidence="1">Regulatory protein RecX</fullName>
    </recommendedName>
</protein>
<dbReference type="EMBL" id="CP000764">
    <property type="protein sequence ID" value="ABS20792.1"/>
    <property type="molecule type" value="Genomic_DNA"/>
</dbReference>
<dbReference type="RefSeq" id="WP_011983549.1">
    <property type="nucleotide sequence ID" value="NC_009674.1"/>
</dbReference>
<dbReference type="SMR" id="A7GKY4"/>
<dbReference type="STRING" id="315749.Bcer98_0437"/>
<dbReference type="GeneID" id="33895784"/>
<dbReference type="KEGG" id="bcy:Bcer98_0437"/>
<dbReference type="eggNOG" id="COG2137">
    <property type="taxonomic scope" value="Bacteria"/>
</dbReference>
<dbReference type="HOGENOM" id="CLU_066607_4_0_9"/>
<dbReference type="OrthoDB" id="5421057at2"/>
<dbReference type="Proteomes" id="UP000002300">
    <property type="component" value="Chromosome"/>
</dbReference>
<dbReference type="GO" id="GO:0005737">
    <property type="term" value="C:cytoplasm"/>
    <property type="evidence" value="ECO:0007669"/>
    <property type="project" value="UniProtKB-SubCell"/>
</dbReference>
<dbReference type="GO" id="GO:0006282">
    <property type="term" value="P:regulation of DNA repair"/>
    <property type="evidence" value="ECO:0007669"/>
    <property type="project" value="UniProtKB-UniRule"/>
</dbReference>
<dbReference type="Gene3D" id="1.10.10.10">
    <property type="entry name" value="Winged helix-like DNA-binding domain superfamily/Winged helix DNA-binding domain"/>
    <property type="match status" value="4"/>
</dbReference>
<dbReference type="HAMAP" id="MF_01114">
    <property type="entry name" value="RecX"/>
    <property type="match status" value="1"/>
</dbReference>
<dbReference type="InterPro" id="IPR053926">
    <property type="entry name" value="RecX_HTH_1st"/>
</dbReference>
<dbReference type="InterPro" id="IPR053924">
    <property type="entry name" value="RecX_HTH_2nd"/>
</dbReference>
<dbReference type="InterPro" id="IPR053925">
    <property type="entry name" value="RecX_HTH_3rd"/>
</dbReference>
<dbReference type="InterPro" id="IPR003783">
    <property type="entry name" value="Regulatory_RecX"/>
</dbReference>
<dbReference type="InterPro" id="IPR036388">
    <property type="entry name" value="WH-like_DNA-bd_sf"/>
</dbReference>
<dbReference type="NCBIfam" id="NF010733">
    <property type="entry name" value="PRK14135.1"/>
    <property type="match status" value="1"/>
</dbReference>
<dbReference type="PANTHER" id="PTHR33602">
    <property type="entry name" value="REGULATORY PROTEIN RECX FAMILY PROTEIN"/>
    <property type="match status" value="1"/>
</dbReference>
<dbReference type="PANTHER" id="PTHR33602:SF1">
    <property type="entry name" value="REGULATORY PROTEIN RECX FAMILY PROTEIN"/>
    <property type="match status" value="1"/>
</dbReference>
<dbReference type="Pfam" id="PF21982">
    <property type="entry name" value="RecX_HTH1"/>
    <property type="match status" value="1"/>
</dbReference>
<dbReference type="Pfam" id="PF02631">
    <property type="entry name" value="RecX_HTH2"/>
    <property type="match status" value="1"/>
</dbReference>
<dbReference type="Pfam" id="PF21981">
    <property type="entry name" value="RecX_HTH3"/>
    <property type="match status" value="2"/>
</dbReference>
<accession>A7GKY4</accession>
<keyword id="KW-0963">Cytoplasm</keyword>
<name>RECX_BACCN</name>
<evidence type="ECO:0000255" key="1">
    <source>
        <dbReference type="HAMAP-Rule" id="MF_01114"/>
    </source>
</evidence>
<feature type="chain" id="PRO_1000084977" description="Regulatory protein RecX">
    <location>
        <begin position="1"/>
        <end position="270"/>
    </location>
</feature>